<protein>
    <recommendedName>
        <fullName evidence="1">Small ribosomal subunit protein bS16c</fullName>
    </recommendedName>
    <alternativeName>
        <fullName evidence="2">30S ribosomal protein S16, chloroplastic</fullName>
    </alternativeName>
</protein>
<geneLocation type="chloroplast"/>
<comment type="subcellular location">
    <subcellularLocation>
        <location>Plastid</location>
        <location>Chloroplast</location>
    </subcellularLocation>
</comment>
<comment type="similarity">
    <text evidence="1">Belongs to the bacterial ribosomal protein bS16 family.</text>
</comment>
<gene>
    <name evidence="1" type="primary">rps16</name>
</gene>
<proteinExistence type="evidence at transcript level"/>
<reference key="1">
    <citation type="journal article" date="2003" name="DNA Res.">
        <title>Complete nucleotide sequence of the chloroplast genome from a leptosporangiate fern, Adiantum capillus-veneris L.</title>
        <authorList>
            <person name="Wolf P.G."/>
            <person name="Rowe C.A."/>
            <person name="Sinclair R.B."/>
            <person name="Hasebe M."/>
        </authorList>
    </citation>
    <scope>NUCLEOTIDE SEQUENCE [LARGE SCALE GENOMIC DNA]</scope>
</reference>
<reference key="2">
    <citation type="journal article" date="2004" name="Gene">
        <title>High levels of RNA editing in a vascular plant chloroplast genome: analysis of transcripts from the fern Adiantum capillus-veneris.</title>
        <authorList>
            <person name="Wolf P.G."/>
            <person name="Rowe C.A."/>
            <person name="Hasebe M."/>
        </authorList>
    </citation>
    <scope>NUCLEOTIDE SEQUENCE [GENOMIC DNA]</scope>
    <scope>ABSENCE OF RNA EDITING</scope>
    <source>
        <tissue>Frond</tissue>
    </source>
</reference>
<dbReference type="EMBL" id="AY178864">
    <property type="protein sequence ID" value="AAP29372.1"/>
    <property type="molecule type" value="Genomic_DNA"/>
</dbReference>
<dbReference type="RefSeq" id="NP_848040.1">
    <property type="nucleotide sequence ID" value="NC_004766.1"/>
</dbReference>
<dbReference type="SMR" id="Q85FN9"/>
<dbReference type="GeneID" id="807367"/>
<dbReference type="GO" id="GO:0009507">
    <property type="term" value="C:chloroplast"/>
    <property type="evidence" value="ECO:0007669"/>
    <property type="project" value="UniProtKB-SubCell"/>
</dbReference>
<dbReference type="GO" id="GO:1990904">
    <property type="term" value="C:ribonucleoprotein complex"/>
    <property type="evidence" value="ECO:0007669"/>
    <property type="project" value="UniProtKB-KW"/>
</dbReference>
<dbReference type="GO" id="GO:0005840">
    <property type="term" value="C:ribosome"/>
    <property type="evidence" value="ECO:0007669"/>
    <property type="project" value="UniProtKB-KW"/>
</dbReference>
<dbReference type="GO" id="GO:0003735">
    <property type="term" value="F:structural constituent of ribosome"/>
    <property type="evidence" value="ECO:0007669"/>
    <property type="project" value="InterPro"/>
</dbReference>
<dbReference type="GO" id="GO:0006412">
    <property type="term" value="P:translation"/>
    <property type="evidence" value="ECO:0007669"/>
    <property type="project" value="UniProtKB-UniRule"/>
</dbReference>
<dbReference type="Gene3D" id="3.30.1320.10">
    <property type="match status" value="1"/>
</dbReference>
<dbReference type="HAMAP" id="MF_00385">
    <property type="entry name" value="Ribosomal_bS16"/>
    <property type="match status" value="1"/>
</dbReference>
<dbReference type="InterPro" id="IPR000307">
    <property type="entry name" value="Ribosomal_bS16"/>
</dbReference>
<dbReference type="InterPro" id="IPR023803">
    <property type="entry name" value="Ribosomal_bS16_dom_sf"/>
</dbReference>
<dbReference type="NCBIfam" id="TIGR00002">
    <property type="entry name" value="S16"/>
    <property type="match status" value="1"/>
</dbReference>
<dbReference type="Pfam" id="PF00886">
    <property type="entry name" value="Ribosomal_S16"/>
    <property type="match status" value="1"/>
</dbReference>
<dbReference type="SUPFAM" id="SSF54565">
    <property type="entry name" value="Ribosomal protein S16"/>
    <property type="match status" value="1"/>
</dbReference>
<sequence>MVKLRPKQCGRKQRTYRIVAIESQSRQEGKVIKEVEFYNPRREETQLDILAITTLCGSGVKLTETVCNIFRRATFKIT</sequence>
<accession>Q85FN9</accession>
<feature type="chain" id="PRO_0000167291" description="Small ribosomal subunit protein bS16c">
    <location>
        <begin position="1"/>
        <end position="78"/>
    </location>
</feature>
<organism>
    <name type="scientific">Adiantum capillus-veneris</name>
    <name type="common">Maidenhair fern</name>
    <dbReference type="NCBI Taxonomy" id="13818"/>
    <lineage>
        <taxon>Eukaryota</taxon>
        <taxon>Viridiplantae</taxon>
        <taxon>Streptophyta</taxon>
        <taxon>Embryophyta</taxon>
        <taxon>Tracheophyta</taxon>
        <taxon>Polypodiopsida</taxon>
        <taxon>Polypodiidae</taxon>
        <taxon>Polypodiales</taxon>
        <taxon>Pteridineae</taxon>
        <taxon>Pteridaceae</taxon>
        <taxon>Vittarioideae</taxon>
        <taxon>Adiantum</taxon>
    </lineage>
</organism>
<keyword id="KW-0150">Chloroplast</keyword>
<keyword id="KW-0934">Plastid</keyword>
<keyword id="KW-0687">Ribonucleoprotein</keyword>
<keyword id="KW-0689">Ribosomal protein</keyword>
<evidence type="ECO:0000255" key="1">
    <source>
        <dbReference type="HAMAP-Rule" id="MF_00385"/>
    </source>
</evidence>
<evidence type="ECO:0000305" key="2"/>
<name>RR16_ADICA</name>